<keyword id="KW-0067">ATP-binding</keyword>
<keyword id="KW-0143">Chaperone</keyword>
<keyword id="KW-0547">Nucleotide-binding</keyword>
<keyword id="KW-0597">Phosphoprotein</keyword>
<keyword id="KW-1185">Reference proteome</keyword>
<keyword id="KW-0346">Stress response</keyword>
<accession>A7IC65</accession>
<comment type="function">
    <text evidence="1">Acts as a chaperone.</text>
</comment>
<comment type="induction">
    <text evidence="1">By stress conditions e.g. heat shock.</text>
</comment>
<comment type="similarity">
    <text evidence="1">Belongs to the heat shock protein 70 family.</text>
</comment>
<feature type="chain" id="PRO_1000119778" description="Chaperone protein DnaK">
    <location>
        <begin position="1"/>
        <end position="631"/>
    </location>
</feature>
<feature type="region of interest" description="Disordered" evidence="2">
    <location>
        <begin position="601"/>
        <end position="631"/>
    </location>
</feature>
<feature type="compositionally biased region" description="Acidic residues" evidence="2">
    <location>
        <begin position="614"/>
        <end position="624"/>
    </location>
</feature>
<feature type="modified residue" description="Phosphothreonine; by autocatalysis" evidence="1">
    <location>
        <position position="198"/>
    </location>
</feature>
<name>DNAK_XANP2</name>
<proteinExistence type="inferred from homology"/>
<evidence type="ECO:0000255" key="1">
    <source>
        <dbReference type="HAMAP-Rule" id="MF_00332"/>
    </source>
</evidence>
<evidence type="ECO:0000256" key="2">
    <source>
        <dbReference type="SAM" id="MobiDB-lite"/>
    </source>
</evidence>
<protein>
    <recommendedName>
        <fullName evidence="1">Chaperone protein DnaK</fullName>
    </recommendedName>
    <alternativeName>
        <fullName evidence="1">HSP70</fullName>
    </alternativeName>
    <alternativeName>
        <fullName evidence="1">Heat shock 70 kDa protein</fullName>
    </alternativeName>
    <alternativeName>
        <fullName evidence="1">Heat shock protein 70</fullName>
    </alternativeName>
</protein>
<reference key="1">
    <citation type="submission" date="2007-07" db="EMBL/GenBank/DDBJ databases">
        <title>Complete sequence of chromosome of Xanthobacter autotrophicus Py2.</title>
        <authorList>
            <consortium name="US DOE Joint Genome Institute"/>
            <person name="Copeland A."/>
            <person name="Lucas S."/>
            <person name="Lapidus A."/>
            <person name="Barry K."/>
            <person name="Glavina del Rio T."/>
            <person name="Hammon N."/>
            <person name="Israni S."/>
            <person name="Dalin E."/>
            <person name="Tice H."/>
            <person name="Pitluck S."/>
            <person name="Sims D."/>
            <person name="Brettin T."/>
            <person name="Bruce D."/>
            <person name="Detter J.C."/>
            <person name="Han C."/>
            <person name="Tapia R."/>
            <person name="Brainard J."/>
            <person name="Schmutz J."/>
            <person name="Larimer F."/>
            <person name="Land M."/>
            <person name="Hauser L."/>
            <person name="Kyrpides N."/>
            <person name="Kim E."/>
            <person name="Ensigns S.A."/>
            <person name="Richardson P."/>
        </authorList>
    </citation>
    <scope>NUCLEOTIDE SEQUENCE [LARGE SCALE GENOMIC DNA]</scope>
    <source>
        <strain>ATCC BAA-1158 / Py2</strain>
    </source>
</reference>
<gene>
    <name evidence="1" type="primary">dnaK</name>
    <name type="ordered locus">Xaut_0350</name>
</gene>
<organism>
    <name type="scientific">Xanthobacter autotrophicus (strain ATCC BAA-1158 / Py2)</name>
    <dbReference type="NCBI Taxonomy" id="78245"/>
    <lineage>
        <taxon>Bacteria</taxon>
        <taxon>Pseudomonadati</taxon>
        <taxon>Pseudomonadota</taxon>
        <taxon>Alphaproteobacteria</taxon>
        <taxon>Hyphomicrobiales</taxon>
        <taxon>Xanthobacteraceae</taxon>
        <taxon>Xanthobacter</taxon>
    </lineage>
</organism>
<dbReference type="EMBL" id="CP000781">
    <property type="protein sequence ID" value="ABS65608.1"/>
    <property type="molecule type" value="Genomic_DNA"/>
</dbReference>
<dbReference type="SMR" id="A7IC65"/>
<dbReference type="STRING" id="78245.Xaut_0350"/>
<dbReference type="KEGG" id="xau:Xaut_0350"/>
<dbReference type="eggNOG" id="COG0443">
    <property type="taxonomic scope" value="Bacteria"/>
</dbReference>
<dbReference type="HOGENOM" id="CLU_005965_2_1_5"/>
<dbReference type="OrthoDB" id="9766019at2"/>
<dbReference type="PhylomeDB" id="A7IC65"/>
<dbReference type="Proteomes" id="UP000002417">
    <property type="component" value="Chromosome"/>
</dbReference>
<dbReference type="GO" id="GO:0005524">
    <property type="term" value="F:ATP binding"/>
    <property type="evidence" value="ECO:0007669"/>
    <property type="project" value="UniProtKB-UniRule"/>
</dbReference>
<dbReference type="GO" id="GO:0140662">
    <property type="term" value="F:ATP-dependent protein folding chaperone"/>
    <property type="evidence" value="ECO:0007669"/>
    <property type="project" value="InterPro"/>
</dbReference>
<dbReference type="GO" id="GO:0051082">
    <property type="term" value="F:unfolded protein binding"/>
    <property type="evidence" value="ECO:0007669"/>
    <property type="project" value="InterPro"/>
</dbReference>
<dbReference type="CDD" id="cd11733">
    <property type="entry name" value="ASKHA_NBD_HSP70_HSPA9"/>
    <property type="match status" value="1"/>
</dbReference>
<dbReference type="FunFam" id="2.60.34.10:FF:000014">
    <property type="entry name" value="Chaperone protein DnaK HSP70"/>
    <property type="match status" value="1"/>
</dbReference>
<dbReference type="FunFam" id="1.20.1270.10:FF:000001">
    <property type="entry name" value="Molecular chaperone DnaK"/>
    <property type="match status" value="1"/>
</dbReference>
<dbReference type="FunFam" id="3.30.420.40:FF:000004">
    <property type="entry name" value="Molecular chaperone DnaK"/>
    <property type="match status" value="1"/>
</dbReference>
<dbReference type="FunFam" id="3.90.640.10:FF:000003">
    <property type="entry name" value="Molecular chaperone DnaK"/>
    <property type="match status" value="1"/>
</dbReference>
<dbReference type="Gene3D" id="1.20.1270.10">
    <property type="match status" value="1"/>
</dbReference>
<dbReference type="Gene3D" id="3.30.420.40">
    <property type="match status" value="2"/>
</dbReference>
<dbReference type="Gene3D" id="3.90.640.10">
    <property type="entry name" value="Actin, Chain A, domain 4"/>
    <property type="match status" value="1"/>
</dbReference>
<dbReference type="Gene3D" id="2.60.34.10">
    <property type="entry name" value="Substrate Binding Domain Of DNAk, Chain A, domain 1"/>
    <property type="match status" value="1"/>
</dbReference>
<dbReference type="HAMAP" id="MF_00332">
    <property type="entry name" value="DnaK"/>
    <property type="match status" value="1"/>
</dbReference>
<dbReference type="InterPro" id="IPR043129">
    <property type="entry name" value="ATPase_NBD"/>
</dbReference>
<dbReference type="InterPro" id="IPR012725">
    <property type="entry name" value="Chaperone_DnaK"/>
</dbReference>
<dbReference type="InterPro" id="IPR018181">
    <property type="entry name" value="Heat_shock_70_CS"/>
</dbReference>
<dbReference type="InterPro" id="IPR029048">
    <property type="entry name" value="HSP70_C_sf"/>
</dbReference>
<dbReference type="InterPro" id="IPR029047">
    <property type="entry name" value="HSP70_peptide-bd_sf"/>
</dbReference>
<dbReference type="InterPro" id="IPR013126">
    <property type="entry name" value="Hsp_70_fam"/>
</dbReference>
<dbReference type="NCBIfam" id="NF001413">
    <property type="entry name" value="PRK00290.1"/>
    <property type="match status" value="1"/>
</dbReference>
<dbReference type="NCBIfam" id="NF003520">
    <property type="entry name" value="PRK05183.1"/>
    <property type="match status" value="1"/>
</dbReference>
<dbReference type="NCBIfam" id="TIGR02350">
    <property type="entry name" value="prok_dnaK"/>
    <property type="match status" value="1"/>
</dbReference>
<dbReference type="PANTHER" id="PTHR19375">
    <property type="entry name" value="HEAT SHOCK PROTEIN 70KDA"/>
    <property type="match status" value="1"/>
</dbReference>
<dbReference type="Pfam" id="PF00012">
    <property type="entry name" value="HSP70"/>
    <property type="match status" value="1"/>
</dbReference>
<dbReference type="PRINTS" id="PR00301">
    <property type="entry name" value="HEATSHOCK70"/>
</dbReference>
<dbReference type="SUPFAM" id="SSF53067">
    <property type="entry name" value="Actin-like ATPase domain"/>
    <property type="match status" value="2"/>
</dbReference>
<dbReference type="SUPFAM" id="SSF100934">
    <property type="entry name" value="Heat shock protein 70kD (HSP70), C-terminal subdomain"/>
    <property type="match status" value="1"/>
</dbReference>
<dbReference type="SUPFAM" id="SSF100920">
    <property type="entry name" value="Heat shock protein 70kD (HSP70), peptide-binding domain"/>
    <property type="match status" value="1"/>
</dbReference>
<dbReference type="PROSITE" id="PS00297">
    <property type="entry name" value="HSP70_1"/>
    <property type="match status" value="1"/>
</dbReference>
<dbReference type="PROSITE" id="PS00329">
    <property type="entry name" value="HSP70_2"/>
    <property type="match status" value="1"/>
</dbReference>
<dbReference type="PROSITE" id="PS01036">
    <property type="entry name" value="HSP70_3"/>
    <property type="match status" value="1"/>
</dbReference>
<sequence length="631" mass="67616">MAKIIGIDLGTTNSCVAVMEGSTPKVIENAEGARTTPSIVAFTEDGERLVGQPAKRQSVTNPERTFFAVKRLIGRRYDDPTVEKDKHLVPYSIVRADNGDAWVEADGKKYSPSQISAFVLQKMKETAESFLGEKVEKAVITVPAYFNDAQRQATKDAGRIAGLEVLRIINEPTAAALAYGLDKKSAGTIAVYDLGGGTFDVSVLEIGDGVFEVKSTNGDTFLGGEDFDMRLVTYLADEFKKEQGIDLRNDKLALQRLKEAAEKAKIELSSATQTEINLPFITADATGPKHLTLKLTRAKFEALVDDLIQRTVEPCRLALKDAGLTAGQIDEVVLVGGMTRMPKVQEVVKQFFGKEPHKGVNPDEVVAIGAAVQAGVLQGDVKDVLLLDVTPLSLGIETLGGVFTRLIDRNTTIPTKKSQTFSTAEDGQTAVTIRVFQGEREMAADNKMLGQFDLMGIPPAPRGVPQVEVTFDIDANGIVQVSAKDKGTGKEQQIRIQASGGLNDADIEKMVKDAEAHAAEDKKRRALVEAKNHAEALVHSTEKAVAEHGDKVGAVEKGAIEAALADLKSTLEGDDVEAITAKTNTLAQASLKLGEAMYAAQQPGAEGAAKPADDVVDAEFTEVDDDKKKSA</sequence>